<evidence type="ECO:0000250" key="1"/>
<evidence type="ECO:0000250" key="2">
    <source>
        <dbReference type="UniProtKB" id="P03901"/>
    </source>
</evidence>
<evidence type="ECO:0000255" key="3"/>
<evidence type="ECO:0000305" key="4"/>
<reference key="1">
    <citation type="journal article" date="1989" name="J. Mol. Evol.">
        <title>Variation in salmonid mitochondrial DNA: evolutionary constraints and mechanisms of substitution.</title>
        <authorList>
            <person name="Thomas W.K."/>
            <person name="Beckenbach A.T."/>
        </authorList>
    </citation>
    <scope>NUCLEOTIDE SEQUENCE OF 1-92</scope>
</reference>
<keyword id="KW-0249">Electron transport</keyword>
<keyword id="KW-0472">Membrane</keyword>
<keyword id="KW-0496">Mitochondrion</keyword>
<keyword id="KW-0520">NAD</keyword>
<keyword id="KW-0679">Respiratory chain</keyword>
<keyword id="KW-1278">Translocase</keyword>
<keyword id="KW-0812">Transmembrane</keyword>
<keyword id="KW-1133">Transmembrane helix</keyword>
<keyword id="KW-0813">Transport</keyword>
<keyword id="KW-0830">Ubiquinone</keyword>
<sequence length="98" mass="10515">MTPVHFSFTSAFILGLMGLAFHRTHLLSALLCLEGMMLSLFIALSLWALQMEATGYSVAPMLLLAFSACEASAGLALLVATARTHGTDRLQSLNLLQC</sequence>
<protein>
    <recommendedName>
        <fullName>NADH-ubiquinone oxidoreductase chain 4L</fullName>
        <ecNumber>7.1.1.2</ecNumber>
    </recommendedName>
    <alternativeName>
        <fullName>NADH dehydrogenase subunit 4L</fullName>
    </alternativeName>
</protein>
<feature type="chain" id="PRO_0000118460" description="NADH-ubiquinone oxidoreductase chain 4L">
    <location>
        <begin position="1"/>
        <end position="98"/>
    </location>
</feature>
<feature type="transmembrane region" description="Helical" evidence="3">
    <location>
        <begin position="1"/>
        <end position="21"/>
    </location>
</feature>
<feature type="transmembrane region" description="Helical" evidence="3">
    <location>
        <begin position="29"/>
        <end position="49"/>
    </location>
</feature>
<feature type="transmembrane region" description="Helical" evidence="3">
    <location>
        <begin position="58"/>
        <end position="78"/>
    </location>
</feature>
<organism>
    <name type="scientific">Oncorhynchus nerka</name>
    <name type="common">Sockeye salmon</name>
    <name type="synonym">Salmo nerka</name>
    <dbReference type="NCBI Taxonomy" id="8023"/>
    <lineage>
        <taxon>Eukaryota</taxon>
        <taxon>Metazoa</taxon>
        <taxon>Chordata</taxon>
        <taxon>Craniata</taxon>
        <taxon>Vertebrata</taxon>
        <taxon>Euteleostomi</taxon>
        <taxon>Actinopterygii</taxon>
        <taxon>Neopterygii</taxon>
        <taxon>Teleostei</taxon>
        <taxon>Protacanthopterygii</taxon>
        <taxon>Salmoniformes</taxon>
        <taxon>Salmonidae</taxon>
        <taxon>Salmoninae</taxon>
        <taxon>Oncorhynchus</taxon>
    </lineage>
</organism>
<comment type="function">
    <text evidence="2">Core subunit of the mitochondrial membrane respiratory chain NADH dehydrogenase (Complex I) which catalyzes electron transfer from NADH through the respiratory chain, using ubiquinone as an electron acceptor. Part of the enzyme membrane arm which is embedded in the lipid bilayer and involved in proton translocation.</text>
</comment>
<comment type="catalytic activity">
    <reaction evidence="2">
        <text>a ubiquinone + NADH + 5 H(+)(in) = a ubiquinol + NAD(+) + 4 H(+)(out)</text>
        <dbReference type="Rhea" id="RHEA:29091"/>
        <dbReference type="Rhea" id="RHEA-COMP:9565"/>
        <dbReference type="Rhea" id="RHEA-COMP:9566"/>
        <dbReference type="ChEBI" id="CHEBI:15378"/>
        <dbReference type="ChEBI" id="CHEBI:16389"/>
        <dbReference type="ChEBI" id="CHEBI:17976"/>
        <dbReference type="ChEBI" id="CHEBI:57540"/>
        <dbReference type="ChEBI" id="CHEBI:57945"/>
        <dbReference type="EC" id="7.1.1.2"/>
    </reaction>
    <physiologicalReaction direction="left-to-right" evidence="2">
        <dbReference type="Rhea" id="RHEA:29092"/>
    </physiologicalReaction>
</comment>
<comment type="subcellular location">
    <subcellularLocation>
        <location evidence="1">Mitochondrion membrane</location>
        <topology evidence="1">Multi-pass membrane protein</topology>
    </subcellularLocation>
</comment>
<comment type="similarity">
    <text evidence="4">Belongs to the complex I subunit 4L family.</text>
</comment>
<gene>
    <name type="primary">MT-ND4L</name>
    <name type="synonym">MTND4L</name>
    <name type="synonym">NADH4L</name>
    <name type="synonym">ND4L</name>
</gene>
<geneLocation type="mitochondrion"/>
<proteinExistence type="inferred from homology"/>
<name>NU4LM_ONCNE</name>
<accession>P69305</accession>
<accession>P11630</accession>
<dbReference type="EC" id="7.1.1.2"/>
<dbReference type="PIR" id="F30401">
    <property type="entry name" value="F30401"/>
</dbReference>
<dbReference type="RefSeq" id="YP_908772.1">
    <property type="nucleotide sequence ID" value="NC_008615.1"/>
</dbReference>
<dbReference type="SMR" id="P69305"/>
<dbReference type="GeneID" id="4555717"/>
<dbReference type="KEGG" id="one:4555717"/>
<dbReference type="CTD" id="4539"/>
<dbReference type="OrthoDB" id="490049at7898"/>
<dbReference type="GO" id="GO:0031966">
    <property type="term" value="C:mitochondrial membrane"/>
    <property type="evidence" value="ECO:0007669"/>
    <property type="project" value="UniProtKB-SubCell"/>
</dbReference>
<dbReference type="GO" id="GO:0045271">
    <property type="term" value="C:respiratory chain complex I"/>
    <property type="evidence" value="ECO:0000250"/>
    <property type="project" value="UniProtKB"/>
</dbReference>
<dbReference type="GO" id="GO:0008137">
    <property type="term" value="F:NADH dehydrogenase (ubiquinone) activity"/>
    <property type="evidence" value="ECO:0000250"/>
    <property type="project" value="UniProtKB"/>
</dbReference>
<dbReference type="GO" id="GO:0042773">
    <property type="term" value="P:ATP synthesis coupled electron transport"/>
    <property type="evidence" value="ECO:0007669"/>
    <property type="project" value="InterPro"/>
</dbReference>
<dbReference type="FunFam" id="1.10.287.3510:FF:000002">
    <property type="entry name" value="NADH-ubiquinone oxidoreductase chain 4L"/>
    <property type="match status" value="1"/>
</dbReference>
<dbReference type="Gene3D" id="1.10.287.3510">
    <property type="match status" value="1"/>
</dbReference>
<dbReference type="InterPro" id="IPR001133">
    <property type="entry name" value="NADH_UbQ_OxRdtase_chain4L/K"/>
</dbReference>
<dbReference type="InterPro" id="IPR039428">
    <property type="entry name" value="NUOK/Mnh_C1-like"/>
</dbReference>
<dbReference type="PANTHER" id="PTHR11434:SF0">
    <property type="entry name" value="NADH-UBIQUINONE OXIDOREDUCTASE CHAIN 4L"/>
    <property type="match status" value="1"/>
</dbReference>
<dbReference type="PANTHER" id="PTHR11434">
    <property type="entry name" value="NADH-UBIQUINONE OXIDOREDUCTASE SUBUNIT ND4L"/>
    <property type="match status" value="1"/>
</dbReference>
<dbReference type="Pfam" id="PF00420">
    <property type="entry name" value="Oxidored_q2"/>
    <property type="match status" value="1"/>
</dbReference>